<reference key="1">
    <citation type="journal article" date="2007" name="Nat. Biotechnol.">
        <title>Complete genome sequence of the fish pathogen Flavobacterium psychrophilum.</title>
        <authorList>
            <person name="Duchaud E."/>
            <person name="Boussaha M."/>
            <person name="Loux V."/>
            <person name="Bernardet J.-F."/>
            <person name="Michel C."/>
            <person name="Kerouault B."/>
            <person name="Mondot S."/>
            <person name="Nicolas P."/>
            <person name="Bossy R."/>
            <person name="Caron C."/>
            <person name="Bessieres P."/>
            <person name="Gibrat J.-F."/>
            <person name="Claverol S."/>
            <person name="Dumetz F."/>
            <person name="Le Henaff M."/>
            <person name="Benmansour A."/>
        </authorList>
    </citation>
    <scope>NUCLEOTIDE SEQUENCE [LARGE SCALE GENOMIC DNA]</scope>
    <source>
        <strain>ATCC 49511 / DSM 21280 / CIP 103535 / JIP02/86</strain>
    </source>
</reference>
<dbReference type="EMBL" id="AM398681">
    <property type="protein sequence ID" value="CAL42565.1"/>
    <property type="molecule type" value="Genomic_DNA"/>
</dbReference>
<dbReference type="RefSeq" id="WP_011962623.1">
    <property type="nucleotide sequence ID" value="NC_009613.3"/>
</dbReference>
<dbReference type="RefSeq" id="YP_001295383.1">
    <property type="nucleotide sequence ID" value="NC_009613.3"/>
</dbReference>
<dbReference type="SMR" id="A6GWU2"/>
<dbReference type="STRING" id="402612.FP0454"/>
<dbReference type="EnsemblBacteria" id="CAL42565">
    <property type="protein sequence ID" value="CAL42565"/>
    <property type="gene ID" value="FP0454"/>
</dbReference>
<dbReference type="GeneID" id="66551592"/>
<dbReference type="KEGG" id="fps:FP0454"/>
<dbReference type="PATRIC" id="fig|402612.5.peg.469"/>
<dbReference type="eggNOG" id="COG0052">
    <property type="taxonomic scope" value="Bacteria"/>
</dbReference>
<dbReference type="HOGENOM" id="CLU_040318_0_2_10"/>
<dbReference type="OrthoDB" id="9808036at2"/>
<dbReference type="Proteomes" id="UP000006394">
    <property type="component" value="Chromosome"/>
</dbReference>
<dbReference type="GO" id="GO:0022627">
    <property type="term" value="C:cytosolic small ribosomal subunit"/>
    <property type="evidence" value="ECO:0007669"/>
    <property type="project" value="TreeGrafter"/>
</dbReference>
<dbReference type="GO" id="GO:0003735">
    <property type="term" value="F:structural constituent of ribosome"/>
    <property type="evidence" value="ECO:0007669"/>
    <property type="project" value="InterPro"/>
</dbReference>
<dbReference type="GO" id="GO:0006412">
    <property type="term" value="P:translation"/>
    <property type="evidence" value="ECO:0007669"/>
    <property type="project" value="UniProtKB-UniRule"/>
</dbReference>
<dbReference type="CDD" id="cd01425">
    <property type="entry name" value="RPS2"/>
    <property type="match status" value="1"/>
</dbReference>
<dbReference type="FunFam" id="1.10.287.610:FF:000001">
    <property type="entry name" value="30S ribosomal protein S2"/>
    <property type="match status" value="1"/>
</dbReference>
<dbReference type="Gene3D" id="3.40.50.10490">
    <property type="entry name" value="Glucose-6-phosphate isomerase like protein, domain 1"/>
    <property type="match status" value="1"/>
</dbReference>
<dbReference type="Gene3D" id="1.10.287.610">
    <property type="entry name" value="Helix hairpin bin"/>
    <property type="match status" value="1"/>
</dbReference>
<dbReference type="HAMAP" id="MF_00291_B">
    <property type="entry name" value="Ribosomal_uS2_B"/>
    <property type="match status" value="1"/>
</dbReference>
<dbReference type="InterPro" id="IPR001865">
    <property type="entry name" value="Ribosomal_uS2"/>
</dbReference>
<dbReference type="InterPro" id="IPR005706">
    <property type="entry name" value="Ribosomal_uS2_bac/mit/plastid"/>
</dbReference>
<dbReference type="InterPro" id="IPR018130">
    <property type="entry name" value="Ribosomal_uS2_CS"/>
</dbReference>
<dbReference type="InterPro" id="IPR023591">
    <property type="entry name" value="Ribosomal_uS2_flav_dom_sf"/>
</dbReference>
<dbReference type="NCBIfam" id="TIGR01011">
    <property type="entry name" value="rpsB_bact"/>
    <property type="match status" value="1"/>
</dbReference>
<dbReference type="PANTHER" id="PTHR12534">
    <property type="entry name" value="30S RIBOSOMAL PROTEIN S2 PROKARYOTIC AND ORGANELLAR"/>
    <property type="match status" value="1"/>
</dbReference>
<dbReference type="PANTHER" id="PTHR12534:SF0">
    <property type="entry name" value="SMALL RIBOSOMAL SUBUNIT PROTEIN US2M"/>
    <property type="match status" value="1"/>
</dbReference>
<dbReference type="Pfam" id="PF00318">
    <property type="entry name" value="Ribosomal_S2"/>
    <property type="match status" value="1"/>
</dbReference>
<dbReference type="PRINTS" id="PR00395">
    <property type="entry name" value="RIBOSOMALS2"/>
</dbReference>
<dbReference type="SUPFAM" id="SSF52313">
    <property type="entry name" value="Ribosomal protein S2"/>
    <property type="match status" value="1"/>
</dbReference>
<dbReference type="PROSITE" id="PS00962">
    <property type="entry name" value="RIBOSOMAL_S2_1"/>
    <property type="match status" value="1"/>
</dbReference>
<dbReference type="PROSITE" id="PS00963">
    <property type="entry name" value="RIBOSOMAL_S2_2"/>
    <property type="match status" value="1"/>
</dbReference>
<gene>
    <name evidence="1" type="primary">rpsB</name>
    <name type="ordered locus">FP0454</name>
</gene>
<name>RS2_FLAPJ</name>
<feature type="chain" id="PRO_1000003960" description="Small ribosomal subunit protein uS2">
    <location>
        <begin position="1"/>
        <end position="266"/>
    </location>
</feature>
<feature type="region of interest" description="Disordered" evidence="2">
    <location>
        <begin position="229"/>
        <end position="254"/>
    </location>
</feature>
<feature type="compositionally biased region" description="Acidic residues" evidence="2">
    <location>
        <begin position="237"/>
        <end position="247"/>
    </location>
</feature>
<comment type="similarity">
    <text evidence="1">Belongs to the universal ribosomal protein uS2 family.</text>
</comment>
<accession>A6GWU2</accession>
<proteinExistence type="inferred from homology"/>
<organism>
    <name type="scientific">Flavobacterium psychrophilum (strain ATCC 49511 / DSM 21280 / CIP 103535 / JIP02/86)</name>
    <dbReference type="NCBI Taxonomy" id="402612"/>
    <lineage>
        <taxon>Bacteria</taxon>
        <taxon>Pseudomonadati</taxon>
        <taxon>Bacteroidota</taxon>
        <taxon>Flavobacteriia</taxon>
        <taxon>Flavobacteriales</taxon>
        <taxon>Flavobacteriaceae</taxon>
        <taxon>Flavobacterium</taxon>
    </lineage>
</organism>
<evidence type="ECO:0000255" key="1">
    <source>
        <dbReference type="HAMAP-Rule" id="MF_00291"/>
    </source>
</evidence>
<evidence type="ECO:0000256" key="2">
    <source>
        <dbReference type="SAM" id="MobiDB-lite"/>
    </source>
</evidence>
<evidence type="ECO:0000305" key="3"/>
<protein>
    <recommendedName>
        <fullName evidence="1">Small ribosomal subunit protein uS2</fullName>
    </recommendedName>
    <alternativeName>
        <fullName evidence="3">30S ribosomal protein S2</fullName>
    </alternativeName>
</protein>
<keyword id="KW-1185">Reference proteome</keyword>
<keyword id="KW-0687">Ribonucleoprotein</keyword>
<keyword id="KW-0689">Ribosomal protein</keyword>
<sequence>MANKIEVKDLLEAGVHFGHMTRKWDPNMAPYIYMERNGIHIINLYKTAAKIEEANEALKKIAASGRKILFVATKKQAKDIVAEKAAAANMPYITERWPGGMLTNFVTIRKAVKKMSTIDRMKKDGTFMTLSKKERLQVDRLRAKLEKNLGSISDMSRLPAALFVVDIKAEHIAIKEAQKLNIPVFAMVDTNSDPRLVEYVIPANDDASKSIDKILTLVTEAIIDGLANRTSDKEADTTTEEVAQEEVTDTKADEKAIVAEAAKTKE</sequence>